<proteinExistence type="evidence at transcript level"/>
<sequence length="152" mass="17254">METPRPVVSRRPFCCTLKCFVKFLRLVVTVTSMIFFIVGQAPEPYIVITGFEVTVIFCFLVLYTCGLDKIMRSFFWPLLDVINSMVTALCMLIVSVLALIPETSTKTILGGVFGFLTVTCTIADCALMCQKLRFRPRQPYQKKSTNDIDDRE</sequence>
<accession>Q9DAS1</accession>
<accession>Q3T9V7</accession>
<accession>Q8BUC3</accession>
<accession>Q91ZA4</accession>
<accession>Q923S4</accession>
<accession>Q923S5</accession>
<comment type="function">
    <text evidence="1 4">May play an important role in inflammation and regeneration of skeletal muscle (By similarity). Essential for embryonic development (PubMed:34446558).</text>
</comment>
<comment type="subcellular location">
    <subcellularLocation>
        <location evidence="7">Membrane</location>
        <topology evidence="7">Multi-pass membrane protein</topology>
    </subcellularLocation>
</comment>
<comment type="alternative products">
    <event type="alternative splicing"/>
    <isoform>
        <id>Q9DAS1-1</id>
        <name>CKLF2</name>
        <sequence type="displayed"/>
    </isoform>
    <isoform>
        <id>Q9DAS1-2</id>
        <name evidence="7">CKLF3</name>
        <sequence type="described" ref="VSP_050600 VSP_050602"/>
    </isoform>
    <isoform>
        <id>Q9DAS1-4</id>
        <name>CKLF4</name>
        <name>mCKLF4</name>
        <sequence type="described" ref="VSP_050599"/>
    </isoform>
    <isoform>
        <id>Q9DAS1-5</id>
        <name>CKLF5</name>
        <sequence type="described" ref="VSP_050603"/>
    </isoform>
</comment>
<comment type="tissue specificity">
    <text evidence="4">Ubiquitous.</text>
</comment>
<comment type="disruption phenotype">
    <text evidence="4">Mice exhibit embryonic lethality.</text>
</comment>
<comment type="similarity">
    <text evidence="7">Belongs to the chemokine-like factor family.</text>
</comment>
<comment type="sequence caution" evidence="7">
    <conflict type="miscellaneous discrepancy">
        <sequence resource="EMBL-CDS" id="AAK94042"/>
    </conflict>
    <text>Intron retention.</text>
</comment>
<keyword id="KW-0025">Alternative splicing</keyword>
<keyword id="KW-0145">Chemotaxis</keyword>
<keyword id="KW-0202">Cytokine</keyword>
<keyword id="KW-0472">Membrane</keyword>
<keyword id="KW-1185">Reference proteome</keyword>
<keyword id="KW-0812">Transmembrane</keyword>
<keyword id="KW-1133">Transmembrane helix</keyword>
<reference key="1">
    <citation type="journal article" date="2005" name="Science">
        <title>The transcriptional landscape of the mammalian genome.</title>
        <authorList>
            <person name="Carninci P."/>
            <person name="Kasukawa T."/>
            <person name="Katayama S."/>
            <person name="Gough J."/>
            <person name="Frith M.C."/>
            <person name="Maeda N."/>
            <person name="Oyama R."/>
            <person name="Ravasi T."/>
            <person name="Lenhard B."/>
            <person name="Wells C."/>
            <person name="Kodzius R."/>
            <person name="Shimokawa K."/>
            <person name="Bajic V.B."/>
            <person name="Brenner S.E."/>
            <person name="Batalov S."/>
            <person name="Forrest A.R."/>
            <person name="Zavolan M."/>
            <person name="Davis M.J."/>
            <person name="Wilming L.G."/>
            <person name="Aidinis V."/>
            <person name="Allen J.E."/>
            <person name="Ambesi-Impiombato A."/>
            <person name="Apweiler R."/>
            <person name="Aturaliya R.N."/>
            <person name="Bailey T.L."/>
            <person name="Bansal M."/>
            <person name="Baxter L."/>
            <person name="Beisel K.W."/>
            <person name="Bersano T."/>
            <person name="Bono H."/>
            <person name="Chalk A.M."/>
            <person name="Chiu K.P."/>
            <person name="Choudhary V."/>
            <person name="Christoffels A."/>
            <person name="Clutterbuck D.R."/>
            <person name="Crowe M.L."/>
            <person name="Dalla E."/>
            <person name="Dalrymple B.P."/>
            <person name="de Bono B."/>
            <person name="Della Gatta G."/>
            <person name="di Bernardo D."/>
            <person name="Down T."/>
            <person name="Engstrom P."/>
            <person name="Fagiolini M."/>
            <person name="Faulkner G."/>
            <person name="Fletcher C.F."/>
            <person name="Fukushima T."/>
            <person name="Furuno M."/>
            <person name="Futaki S."/>
            <person name="Gariboldi M."/>
            <person name="Georgii-Hemming P."/>
            <person name="Gingeras T.R."/>
            <person name="Gojobori T."/>
            <person name="Green R.E."/>
            <person name="Gustincich S."/>
            <person name="Harbers M."/>
            <person name="Hayashi Y."/>
            <person name="Hensch T.K."/>
            <person name="Hirokawa N."/>
            <person name="Hill D."/>
            <person name="Huminiecki L."/>
            <person name="Iacono M."/>
            <person name="Ikeo K."/>
            <person name="Iwama A."/>
            <person name="Ishikawa T."/>
            <person name="Jakt M."/>
            <person name="Kanapin A."/>
            <person name="Katoh M."/>
            <person name="Kawasawa Y."/>
            <person name="Kelso J."/>
            <person name="Kitamura H."/>
            <person name="Kitano H."/>
            <person name="Kollias G."/>
            <person name="Krishnan S.P."/>
            <person name="Kruger A."/>
            <person name="Kummerfeld S.K."/>
            <person name="Kurochkin I.V."/>
            <person name="Lareau L.F."/>
            <person name="Lazarevic D."/>
            <person name="Lipovich L."/>
            <person name="Liu J."/>
            <person name="Liuni S."/>
            <person name="McWilliam S."/>
            <person name="Madan Babu M."/>
            <person name="Madera M."/>
            <person name="Marchionni L."/>
            <person name="Matsuda H."/>
            <person name="Matsuzawa S."/>
            <person name="Miki H."/>
            <person name="Mignone F."/>
            <person name="Miyake S."/>
            <person name="Morris K."/>
            <person name="Mottagui-Tabar S."/>
            <person name="Mulder N."/>
            <person name="Nakano N."/>
            <person name="Nakauchi H."/>
            <person name="Ng P."/>
            <person name="Nilsson R."/>
            <person name="Nishiguchi S."/>
            <person name="Nishikawa S."/>
            <person name="Nori F."/>
            <person name="Ohara O."/>
            <person name="Okazaki Y."/>
            <person name="Orlando V."/>
            <person name="Pang K.C."/>
            <person name="Pavan W.J."/>
            <person name="Pavesi G."/>
            <person name="Pesole G."/>
            <person name="Petrovsky N."/>
            <person name="Piazza S."/>
            <person name="Reed J."/>
            <person name="Reid J.F."/>
            <person name="Ring B.Z."/>
            <person name="Ringwald M."/>
            <person name="Rost B."/>
            <person name="Ruan Y."/>
            <person name="Salzberg S.L."/>
            <person name="Sandelin A."/>
            <person name="Schneider C."/>
            <person name="Schoenbach C."/>
            <person name="Sekiguchi K."/>
            <person name="Semple C.A."/>
            <person name="Seno S."/>
            <person name="Sessa L."/>
            <person name="Sheng Y."/>
            <person name="Shibata Y."/>
            <person name="Shimada H."/>
            <person name="Shimada K."/>
            <person name="Silva D."/>
            <person name="Sinclair B."/>
            <person name="Sperling S."/>
            <person name="Stupka E."/>
            <person name="Sugiura K."/>
            <person name="Sultana R."/>
            <person name="Takenaka Y."/>
            <person name="Taki K."/>
            <person name="Tammoja K."/>
            <person name="Tan S.L."/>
            <person name="Tang S."/>
            <person name="Taylor M.S."/>
            <person name="Tegner J."/>
            <person name="Teichmann S.A."/>
            <person name="Ueda H.R."/>
            <person name="van Nimwegen E."/>
            <person name="Verardo R."/>
            <person name="Wei C.L."/>
            <person name="Yagi K."/>
            <person name="Yamanishi H."/>
            <person name="Zabarovsky E."/>
            <person name="Zhu S."/>
            <person name="Zimmer A."/>
            <person name="Hide W."/>
            <person name="Bult C."/>
            <person name="Grimmond S.M."/>
            <person name="Teasdale R.D."/>
            <person name="Liu E.T."/>
            <person name="Brusic V."/>
            <person name="Quackenbush J."/>
            <person name="Wahlestedt C."/>
            <person name="Mattick J.S."/>
            <person name="Hume D.A."/>
            <person name="Kai C."/>
            <person name="Sasaki D."/>
            <person name="Tomaru Y."/>
            <person name="Fukuda S."/>
            <person name="Kanamori-Katayama M."/>
            <person name="Suzuki M."/>
            <person name="Aoki J."/>
            <person name="Arakawa T."/>
            <person name="Iida J."/>
            <person name="Imamura K."/>
            <person name="Itoh M."/>
            <person name="Kato T."/>
            <person name="Kawaji H."/>
            <person name="Kawagashira N."/>
            <person name="Kawashima T."/>
            <person name="Kojima M."/>
            <person name="Kondo S."/>
            <person name="Konno H."/>
            <person name="Nakano K."/>
            <person name="Ninomiya N."/>
            <person name="Nishio T."/>
            <person name="Okada M."/>
            <person name="Plessy C."/>
            <person name="Shibata K."/>
            <person name="Shiraki T."/>
            <person name="Suzuki S."/>
            <person name="Tagami M."/>
            <person name="Waki K."/>
            <person name="Watahiki A."/>
            <person name="Okamura-Oho Y."/>
            <person name="Suzuki H."/>
            <person name="Kawai J."/>
            <person name="Hayashizaki Y."/>
        </authorList>
    </citation>
    <scope>NUCLEOTIDE SEQUENCE [LARGE SCALE MRNA] (ISOFORMS CKLF2 AND CKLF3)</scope>
    <source>
        <strain>C57BL/6J</strain>
        <strain>NOD</strain>
        <tissue>Corpora quadrigemina</tissue>
        <tissue>Embryonic head</tissue>
        <tissue>Liver</tissue>
        <tissue>Spleen</tissue>
        <tissue>Testis</tissue>
    </source>
</reference>
<reference evidence="7" key="2">
    <citation type="submission" date="2001-07" db="EMBL/GenBank/DDBJ databases">
        <authorList>
            <person name="Rui M."/>
            <person name="Han W.L."/>
            <person name="Xia D.L."/>
            <person name="Liu Y."/>
            <person name="Zhang Y.M."/>
            <person name="Song Q.S."/>
            <person name="Di C.H."/>
            <person name="Ma D.L."/>
        </authorList>
    </citation>
    <scope>NUCLEOTIDE SEQUENCE [MRNA] (ISOFORMS CKLF2; CKLF4 AND CKLF5)</scope>
    <source>
        <strain evidence="7">BALB/cJ</strain>
    </source>
</reference>
<reference key="3">
    <citation type="journal article" date="2021" name="Proc. Natl. Acad. Sci. U.S.A.">
        <title>SPATA33 localizes calcineurin to the mitochondria and regulates sperm motility in mice.</title>
        <authorList>
            <person name="Miyata H."/>
            <person name="Oura S."/>
            <person name="Morohoshi A."/>
            <person name="Shimada K."/>
            <person name="Mashiko D."/>
            <person name="Oyama Y."/>
            <person name="Kaneda Y."/>
            <person name="Matsumura T."/>
            <person name="Abbasi F."/>
            <person name="Ikawa M."/>
        </authorList>
    </citation>
    <scope>FUNCTION</scope>
    <scope>DISRUPTION PHENOTYPE</scope>
    <scope>TISSUE SPECIFICITY</scope>
</reference>
<protein>
    <recommendedName>
        <fullName>Chemokine-like factor</fullName>
    </recommendedName>
</protein>
<dbReference type="EMBL" id="AK005577">
    <property type="protein sequence ID" value="BAB24133.1"/>
    <property type="molecule type" value="mRNA"/>
</dbReference>
<dbReference type="EMBL" id="AK046397">
    <property type="protein sequence ID" value="BAC32704.1"/>
    <property type="molecule type" value="mRNA"/>
</dbReference>
<dbReference type="EMBL" id="AK050112">
    <property type="protein sequence ID" value="BAC34072.1"/>
    <property type="molecule type" value="mRNA"/>
</dbReference>
<dbReference type="EMBL" id="AK086063">
    <property type="protein sequence ID" value="BAC39602.1"/>
    <property type="molecule type" value="mRNA"/>
</dbReference>
<dbReference type="EMBL" id="AK156237">
    <property type="protein sequence ID" value="BAE33637.1"/>
    <property type="molecule type" value="mRNA"/>
</dbReference>
<dbReference type="EMBL" id="AK172265">
    <property type="protein sequence ID" value="BAE42913.1"/>
    <property type="molecule type" value="mRNA"/>
</dbReference>
<dbReference type="EMBL" id="AF401530">
    <property type="protein sequence ID" value="AAK94042.1"/>
    <property type="status" value="ALT_SEQ"/>
    <property type="molecule type" value="mRNA"/>
</dbReference>
<dbReference type="EMBL" id="AF401531">
    <property type="protein sequence ID" value="AAK94043.2"/>
    <property type="molecule type" value="mRNA"/>
</dbReference>
<dbReference type="EMBL" id="AY046597">
    <property type="protein sequence ID" value="AAL05945.1"/>
    <property type="molecule type" value="mRNA"/>
</dbReference>
<dbReference type="EMBL" id="AY047360">
    <property type="protein sequence ID" value="AAL10703.1"/>
    <property type="molecule type" value="mRNA"/>
</dbReference>
<dbReference type="CCDS" id="CCDS40449.1">
    <molecule id="Q9DAS1-2"/>
</dbReference>
<dbReference type="CCDS" id="CCDS40450.1">
    <molecule id="Q9DAS1-1"/>
</dbReference>
<dbReference type="CCDS" id="CCDS85592.1">
    <molecule id="Q9DAS1-4"/>
</dbReference>
<dbReference type="RefSeq" id="NP_001032930.1">
    <molecule id="Q9DAS1-2"/>
    <property type="nucleotide sequence ID" value="NM_001037841.3"/>
</dbReference>
<dbReference type="RefSeq" id="NP_001273312.1">
    <molecule id="Q9DAS1-4"/>
    <property type="nucleotide sequence ID" value="NM_001286383.1"/>
</dbReference>
<dbReference type="RefSeq" id="NP_083571.1">
    <molecule id="Q9DAS1-1"/>
    <property type="nucleotide sequence ID" value="NM_029295.3"/>
</dbReference>
<dbReference type="RefSeq" id="XP_030099687.1">
    <molecule id="Q9DAS1-5"/>
    <property type="nucleotide sequence ID" value="XM_030243827.2"/>
</dbReference>
<dbReference type="SMR" id="Q9DAS1"/>
<dbReference type="BioGRID" id="217495">
    <property type="interactions" value="2"/>
</dbReference>
<dbReference type="FunCoup" id="Q9DAS1">
    <property type="interactions" value="52"/>
</dbReference>
<dbReference type="STRING" id="10090.ENSMUSP00000034342"/>
<dbReference type="PhosphoSitePlus" id="Q9DAS1"/>
<dbReference type="SwissPalm" id="Q9DAS1"/>
<dbReference type="PaxDb" id="10090-ENSMUSP00000034342"/>
<dbReference type="ProteomicsDB" id="283511">
    <molecule id="Q9DAS1-1"/>
</dbReference>
<dbReference type="ProteomicsDB" id="283512">
    <molecule id="Q9DAS1-2"/>
</dbReference>
<dbReference type="ProteomicsDB" id="283513">
    <molecule id="Q9DAS1-4"/>
</dbReference>
<dbReference type="ProteomicsDB" id="283514">
    <molecule id="Q9DAS1-5"/>
</dbReference>
<dbReference type="Antibodypedia" id="29261">
    <property type="antibodies" value="124 antibodies from 22 providers"/>
</dbReference>
<dbReference type="DNASU" id="75458"/>
<dbReference type="Ensembl" id="ENSMUST00000034342.13">
    <molecule id="Q9DAS1-1"/>
    <property type="protein sequence ID" value="ENSMUSP00000034342.6"/>
    <property type="gene ID" value="ENSMUSG00000054400.17"/>
</dbReference>
<dbReference type="Ensembl" id="ENSMUST00000098464.6">
    <molecule id="Q9DAS1-2"/>
    <property type="protein sequence ID" value="ENSMUSP00000096064.5"/>
    <property type="gene ID" value="ENSMUSG00000054400.17"/>
</dbReference>
<dbReference type="Ensembl" id="ENSMUST00000211809.2">
    <molecule id="Q9DAS1-4"/>
    <property type="protein sequence ID" value="ENSMUSP00000148697.2"/>
    <property type="gene ID" value="ENSMUSG00000054400.17"/>
</dbReference>
<dbReference type="Ensembl" id="ENSMUST00000212410.2">
    <molecule id="Q9DAS1-5"/>
    <property type="protein sequence ID" value="ENSMUSP00000148816.2"/>
    <property type="gene ID" value="ENSMUSG00000054400.17"/>
</dbReference>
<dbReference type="GeneID" id="75458"/>
<dbReference type="KEGG" id="mmu:75458"/>
<dbReference type="UCSC" id="uc009nac.2">
    <molecule id="Q9DAS1-4"/>
    <property type="organism name" value="mouse"/>
</dbReference>
<dbReference type="UCSC" id="uc009nad.2">
    <molecule id="Q9DAS1-1"/>
    <property type="organism name" value="mouse"/>
</dbReference>
<dbReference type="UCSC" id="uc009nag.2">
    <molecule id="Q9DAS1-2"/>
    <property type="organism name" value="mouse"/>
</dbReference>
<dbReference type="AGR" id="MGI:1922708"/>
<dbReference type="CTD" id="51192"/>
<dbReference type="MGI" id="MGI:1922708">
    <property type="gene designation" value="Cklf"/>
</dbReference>
<dbReference type="VEuPathDB" id="HostDB:ENSMUSG00000054400"/>
<dbReference type="eggNOG" id="KOG4788">
    <property type="taxonomic scope" value="Eukaryota"/>
</dbReference>
<dbReference type="GeneTree" id="ENSGT00940000162264"/>
<dbReference type="HOGENOM" id="CLU_108546_3_0_1"/>
<dbReference type="InParanoid" id="Q9DAS1"/>
<dbReference type="OMA" id="CVLCIID"/>
<dbReference type="OrthoDB" id="5976667at2759"/>
<dbReference type="PhylomeDB" id="Q9DAS1"/>
<dbReference type="TreeFam" id="TF317387"/>
<dbReference type="BioGRID-ORCS" id="75458">
    <property type="hits" value="3 hits in 80 CRISPR screens"/>
</dbReference>
<dbReference type="ChiTaRS" id="Cklf">
    <property type="organism name" value="mouse"/>
</dbReference>
<dbReference type="PRO" id="PR:Q9DAS1"/>
<dbReference type="Proteomes" id="UP000000589">
    <property type="component" value="Chromosome 8"/>
</dbReference>
<dbReference type="RNAct" id="Q9DAS1">
    <property type="molecule type" value="protein"/>
</dbReference>
<dbReference type="Bgee" id="ENSMUSG00000054400">
    <property type="expression patterns" value="Expressed in spermatocyte and 204 other cell types or tissues"/>
</dbReference>
<dbReference type="ExpressionAtlas" id="Q9DAS1">
    <property type="expression patterns" value="baseline and differential"/>
</dbReference>
<dbReference type="GO" id="GO:0005615">
    <property type="term" value="C:extracellular space"/>
    <property type="evidence" value="ECO:0007669"/>
    <property type="project" value="UniProtKB-KW"/>
</dbReference>
<dbReference type="GO" id="GO:0016020">
    <property type="term" value="C:membrane"/>
    <property type="evidence" value="ECO:0007669"/>
    <property type="project" value="UniProtKB-SubCell"/>
</dbReference>
<dbReference type="GO" id="GO:0008009">
    <property type="term" value="F:chemokine activity"/>
    <property type="evidence" value="ECO:0007669"/>
    <property type="project" value="Ensembl"/>
</dbReference>
<dbReference type="GO" id="GO:0048247">
    <property type="term" value="P:lymphocyte chemotaxis"/>
    <property type="evidence" value="ECO:0007669"/>
    <property type="project" value="Ensembl"/>
</dbReference>
<dbReference type="GO" id="GO:0048246">
    <property type="term" value="P:macrophage chemotaxis"/>
    <property type="evidence" value="ECO:0007669"/>
    <property type="project" value="Ensembl"/>
</dbReference>
<dbReference type="GO" id="GO:0030593">
    <property type="term" value="P:neutrophil chemotaxis"/>
    <property type="evidence" value="ECO:0007669"/>
    <property type="project" value="Ensembl"/>
</dbReference>
<dbReference type="GO" id="GO:0032940">
    <property type="term" value="P:secretion by cell"/>
    <property type="evidence" value="ECO:0007669"/>
    <property type="project" value="Ensembl"/>
</dbReference>
<dbReference type="InterPro" id="IPR008253">
    <property type="entry name" value="Marvel"/>
</dbReference>
<dbReference type="InterPro" id="IPR050578">
    <property type="entry name" value="MARVEL-CKLF_proteins"/>
</dbReference>
<dbReference type="PANTHER" id="PTHR22776:SF45">
    <property type="entry name" value="CHEMOKINE-LIKE FACTOR"/>
    <property type="match status" value="1"/>
</dbReference>
<dbReference type="PANTHER" id="PTHR22776">
    <property type="entry name" value="MARVEL-CONTAINING POTENTIAL LIPID RAFT-ASSOCIATED PROTEIN"/>
    <property type="match status" value="1"/>
</dbReference>
<dbReference type="PROSITE" id="PS51225">
    <property type="entry name" value="MARVEL"/>
    <property type="match status" value="1"/>
</dbReference>
<gene>
    <name type="primary">Cklf</name>
</gene>
<organism evidence="8">
    <name type="scientific">Mus musculus</name>
    <name type="common">Mouse</name>
    <dbReference type="NCBI Taxonomy" id="10090"/>
    <lineage>
        <taxon>Eukaryota</taxon>
        <taxon>Metazoa</taxon>
        <taxon>Chordata</taxon>
        <taxon>Craniata</taxon>
        <taxon>Vertebrata</taxon>
        <taxon>Euteleostomi</taxon>
        <taxon>Mammalia</taxon>
        <taxon>Eutheria</taxon>
        <taxon>Euarchontoglires</taxon>
        <taxon>Glires</taxon>
        <taxon>Rodentia</taxon>
        <taxon>Myomorpha</taxon>
        <taxon>Muroidea</taxon>
        <taxon>Muridae</taxon>
        <taxon>Murinae</taxon>
        <taxon>Mus</taxon>
        <taxon>Mus</taxon>
    </lineage>
</organism>
<name>CKLF_MOUSE</name>
<evidence type="ECO:0000250" key="1">
    <source>
        <dbReference type="UniProtKB" id="Q9UBR5"/>
    </source>
</evidence>
<evidence type="ECO:0000255" key="2"/>
<evidence type="ECO:0000255" key="3">
    <source>
        <dbReference type="PROSITE-ProRule" id="PRU00581"/>
    </source>
</evidence>
<evidence type="ECO:0000269" key="4">
    <source>
    </source>
</evidence>
<evidence type="ECO:0000303" key="5">
    <source>
    </source>
</evidence>
<evidence type="ECO:0000303" key="6">
    <source ref="2"/>
</evidence>
<evidence type="ECO:0000305" key="7"/>
<evidence type="ECO:0000312" key="8">
    <source>
        <dbReference type="EMBL" id="BAB24133.1"/>
    </source>
</evidence>
<feature type="chain" id="PRO_0000186095" description="Chemokine-like factor">
    <location>
        <begin position="1"/>
        <end position="152"/>
    </location>
</feature>
<feature type="transmembrane region" description="Helical" evidence="2">
    <location>
        <begin position="19"/>
        <end position="39"/>
    </location>
</feature>
<feature type="transmembrane region" description="Helical" evidence="2">
    <location>
        <begin position="46"/>
        <end position="66"/>
    </location>
</feature>
<feature type="transmembrane region" description="Helical" evidence="2">
    <location>
        <begin position="81"/>
        <end position="101"/>
    </location>
</feature>
<feature type="transmembrane region" description="Helical" evidence="2">
    <location>
        <begin position="108"/>
        <end position="128"/>
    </location>
</feature>
<feature type="domain" description="MARVEL" evidence="3">
    <location>
        <begin position="13"/>
        <end position="133"/>
    </location>
</feature>
<feature type="splice variant" id="VSP_050599" description="In isoform CKLF4." evidence="6">
    <location>
        <begin position="80"/>
        <end position="111"/>
    </location>
</feature>
<feature type="splice variant" id="VSP_050600" description="In isoform CKLF3." evidence="5">
    <original>DVINSMVTALCMLIVSV</original>
    <variation>ISFPCECRLVSCQLDPS</variation>
    <location>
        <begin position="80"/>
        <end position="96"/>
    </location>
</feature>
<feature type="splice variant" id="VSP_050602" description="In isoform CKLF3." evidence="5">
    <location>
        <begin position="97"/>
        <end position="152"/>
    </location>
</feature>
<feature type="splice variant" id="VSP_050603" description="In isoform CKLF5." evidence="6">
    <original>VFGFLTVTCTIADCALMCQKLRFRPRQPYQKKSTNDIDDRE</original>
    <variation>QGPHRTDLALP</variation>
    <location>
        <begin position="112"/>
        <end position="152"/>
    </location>
</feature>